<evidence type="ECO:0000255" key="1">
    <source>
        <dbReference type="HAMAP-Rule" id="MF_01080"/>
    </source>
</evidence>
<organism>
    <name type="scientific">Xanthomonas campestris pv. campestris (strain B100)</name>
    <dbReference type="NCBI Taxonomy" id="509169"/>
    <lineage>
        <taxon>Bacteria</taxon>
        <taxon>Pseudomonadati</taxon>
        <taxon>Pseudomonadota</taxon>
        <taxon>Gammaproteobacteria</taxon>
        <taxon>Lysobacterales</taxon>
        <taxon>Lysobacteraceae</taxon>
        <taxon>Xanthomonas</taxon>
    </lineage>
</organism>
<protein>
    <recommendedName>
        <fullName evidence="1">tRNA pseudouridine synthase B</fullName>
        <ecNumber evidence="1">5.4.99.25</ecNumber>
    </recommendedName>
    <alternativeName>
        <fullName evidence="1">tRNA pseudouridine(55) synthase</fullName>
        <shortName evidence="1">Psi55 synthase</shortName>
    </alternativeName>
    <alternativeName>
        <fullName evidence="1">tRNA pseudouridylate synthase</fullName>
    </alternativeName>
    <alternativeName>
        <fullName evidence="1">tRNA-uridine isomerase</fullName>
    </alternativeName>
</protein>
<sequence>MRPRITFRPLHGILLLDKPAGLSSNNALQAARRLLRAEKGGHTGSLDPLATGLLPLCFGEATKIAGLLLGSAKAYDADIVLGVTTDTDDADGQPLRERPVPALSEAALQAALAPFIGRIQQQAPIYSALKQGGEPLYAKARRGEVIEAPVREVEVHAITLTSYASPRLRLRVTCGSGTYIRSLARDLGEALGCGAHIAALRRVWVEPFRTPEMITLEALTALVESGADAAQLLLPVAAGLSDFAQITLDATLVARFRMGQRLRDPAFPEGQVAVFDTDGSPAGLGLVDADGRLSPQRLFNGLNAAAAC</sequence>
<proteinExistence type="inferred from homology"/>
<feature type="chain" id="PRO_1000149837" description="tRNA pseudouridine synthase B">
    <location>
        <begin position="1"/>
        <end position="308"/>
    </location>
</feature>
<feature type="active site" description="Nucleophile" evidence="1">
    <location>
        <position position="47"/>
    </location>
</feature>
<accession>B0RRB6</accession>
<comment type="function">
    <text evidence="1">Responsible for synthesis of pseudouridine from uracil-55 in the psi GC loop of transfer RNAs.</text>
</comment>
<comment type="catalytic activity">
    <reaction evidence="1">
        <text>uridine(55) in tRNA = pseudouridine(55) in tRNA</text>
        <dbReference type="Rhea" id="RHEA:42532"/>
        <dbReference type="Rhea" id="RHEA-COMP:10101"/>
        <dbReference type="Rhea" id="RHEA-COMP:10102"/>
        <dbReference type="ChEBI" id="CHEBI:65314"/>
        <dbReference type="ChEBI" id="CHEBI:65315"/>
        <dbReference type="EC" id="5.4.99.25"/>
    </reaction>
</comment>
<comment type="similarity">
    <text evidence="1">Belongs to the pseudouridine synthase TruB family. Type 1 subfamily.</text>
</comment>
<name>TRUB_XANCB</name>
<keyword id="KW-0413">Isomerase</keyword>
<keyword id="KW-0819">tRNA processing</keyword>
<gene>
    <name evidence="1" type="primary">truB</name>
    <name type="ordered locus">xcc-b100_1651</name>
</gene>
<reference key="1">
    <citation type="journal article" date="2008" name="J. Biotechnol.">
        <title>The genome of Xanthomonas campestris pv. campestris B100 and its use for the reconstruction of metabolic pathways involved in xanthan biosynthesis.</title>
        <authorList>
            <person name="Vorhoelter F.-J."/>
            <person name="Schneiker S."/>
            <person name="Goesmann A."/>
            <person name="Krause L."/>
            <person name="Bekel T."/>
            <person name="Kaiser O."/>
            <person name="Linke B."/>
            <person name="Patschkowski T."/>
            <person name="Rueckert C."/>
            <person name="Schmid J."/>
            <person name="Sidhu V.K."/>
            <person name="Sieber V."/>
            <person name="Tauch A."/>
            <person name="Watt S.A."/>
            <person name="Weisshaar B."/>
            <person name="Becker A."/>
            <person name="Niehaus K."/>
            <person name="Puehler A."/>
        </authorList>
    </citation>
    <scope>NUCLEOTIDE SEQUENCE [LARGE SCALE GENOMIC DNA]</scope>
    <source>
        <strain>B100</strain>
    </source>
</reference>
<dbReference type="EC" id="5.4.99.25" evidence="1"/>
<dbReference type="EMBL" id="AM920689">
    <property type="protein sequence ID" value="CAP51001.1"/>
    <property type="molecule type" value="Genomic_DNA"/>
</dbReference>
<dbReference type="SMR" id="B0RRB6"/>
<dbReference type="KEGG" id="xca:xcc-b100_1651"/>
<dbReference type="HOGENOM" id="CLU_032087_0_3_6"/>
<dbReference type="Proteomes" id="UP000001188">
    <property type="component" value="Chromosome"/>
</dbReference>
<dbReference type="GO" id="GO:0003723">
    <property type="term" value="F:RNA binding"/>
    <property type="evidence" value="ECO:0007669"/>
    <property type="project" value="InterPro"/>
</dbReference>
<dbReference type="GO" id="GO:0160148">
    <property type="term" value="F:tRNA pseudouridine(55) synthase activity"/>
    <property type="evidence" value="ECO:0007669"/>
    <property type="project" value="UniProtKB-EC"/>
</dbReference>
<dbReference type="GO" id="GO:1990481">
    <property type="term" value="P:mRNA pseudouridine synthesis"/>
    <property type="evidence" value="ECO:0007669"/>
    <property type="project" value="TreeGrafter"/>
</dbReference>
<dbReference type="GO" id="GO:0031119">
    <property type="term" value="P:tRNA pseudouridine synthesis"/>
    <property type="evidence" value="ECO:0007669"/>
    <property type="project" value="UniProtKB-UniRule"/>
</dbReference>
<dbReference type="CDD" id="cd02573">
    <property type="entry name" value="PseudoU_synth_EcTruB"/>
    <property type="match status" value="1"/>
</dbReference>
<dbReference type="CDD" id="cd21152">
    <property type="entry name" value="PUA_TruB_bacterial"/>
    <property type="match status" value="1"/>
</dbReference>
<dbReference type="FunFam" id="3.30.2350.10:FF:000011">
    <property type="entry name" value="tRNA pseudouridine synthase B"/>
    <property type="match status" value="1"/>
</dbReference>
<dbReference type="Gene3D" id="3.30.2350.10">
    <property type="entry name" value="Pseudouridine synthase"/>
    <property type="match status" value="1"/>
</dbReference>
<dbReference type="Gene3D" id="2.30.130.10">
    <property type="entry name" value="PUA domain"/>
    <property type="match status" value="1"/>
</dbReference>
<dbReference type="HAMAP" id="MF_01080">
    <property type="entry name" value="TruB_bact"/>
    <property type="match status" value="1"/>
</dbReference>
<dbReference type="InterPro" id="IPR020103">
    <property type="entry name" value="PsdUridine_synth_cat_dom_sf"/>
</dbReference>
<dbReference type="InterPro" id="IPR002501">
    <property type="entry name" value="PsdUridine_synth_N"/>
</dbReference>
<dbReference type="InterPro" id="IPR015947">
    <property type="entry name" value="PUA-like_sf"/>
</dbReference>
<dbReference type="InterPro" id="IPR036974">
    <property type="entry name" value="PUA_sf"/>
</dbReference>
<dbReference type="InterPro" id="IPR014780">
    <property type="entry name" value="tRNA_psdUridine_synth_TruB"/>
</dbReference>
<dbReference type="InterPro" id="IPR015240">
    <property type="entry name" value="tRNA_sdUridine_synth_fam1_C"/>
</dbReference>
<dbReference type="InterPro" id="IPR032819">
    <property type="entry name" value="TruB_C"/>
</dbReference>
<dbReference type="NCBIfam" id="TIGR00431">
    <property type="entry name" value="TruB"/>
    <property type="match status" value="1"/>
</dbReference>
<dbReference type="PANTHER" id="PTHR13767:SF2">
    <property type="entry name" value="PSEUDOURIDYLATE SYNTHASE TRUB1"/>
    <property type="match status" value="1"/>
</dbReference>
<dbReference type="PANTHER" id="PTHR13767">
    <property type="entry name" value="TRNA-PSEUDOURIDINE SYNTHASE"/>
    <property type="match status" value="1"/>
</dbReference>
<dbReference type="Pfam" id="PF09157">
    <property type="entry name" value="TruB-C_2"/>
    <property type="match status" value="1"/>
</dbReference>
<dbReference type="Pfam" id="PF16198">
    <property type="entry name" value="TruB_C_2"/>
    <property type="match status" value="1"/>
</dbReference>
<dbReference type="Pfam" id="PF01509">
    <property type="entry name" value="TruB_N"/>
    <property type="match status" value="1"/>
</dbReference>
<dbReference type="SUPFAM" id="SSF55120">
    <property type="entry name" value="Pseudouridine synthase"/>
    <property type="match status" value="1"/>
</dbReference>
<dbReference type="SUPFAM" id="SSF88697">
    <property type="entry name" value="PUA domain-like"/>
    <property type="match status" value="1"/>
</dbReference>